<name>TCB_FLV</name>
<accession>P11364</accession>
<feature type="signal peptide">
    <location>
        <begin position="1"/>
        <end position="28"/>
    </location>
</feature>
<feature type="chain" id="PRO_0000033589" description="Viral T-cell receptor beta chain-like T17T-22">
    <location>
        <begin position="29"/>
        <end position="321"/>
    </location>
</feature>
<feature type="region of interest" description="V segment">
    <location>
        <begin position="29"/>
        <end position="122"/>
    </location>
</feature>
<feature type="region of interest" description="D segment">
    <location>
        <begin position="123"/>
        <end position="128"/>
    </location>
</feature>
<feature type="region of interest" description="J segment">
    <location>
        <begin position="129"/>
        <end position="144"/>
    </location>
</feature>
<feature type="region of interest" description="C region">
    <location>
        <begin position="145"/>
        <end position="321"/>
    </location>
</feature>
<feature type="glycosylation site" description="N-linked (GlcNAc...) asparagine; by host" evidence="1">
    <location>
        <position position="105"/>
    </location>
</feature>
<feature type="glycosylation site" description="N-linked (GlcNAc...) asparagine; by host" evidence="1">
    <location>
        <position position="214"/>
    </location>
</feature>
<feature type="glycosylation site" description="N-linked (GlcNAc...) asparagine; by host" evidence="1">
    <location>
        <position position="264"/>
    </location>
</feature>
<proteinExistence type="predicted"/>
<gene>
    <name type="primary">V-TCR</name>
</gene>
<reference key="1">
    <citation type="journal article" date="1987" name="Nature">
        <title>Retroviral transduction of T-cell antigen receptor beta-chain and myc genes.</title>
        <authorList>
            <person name="Fulton R."/>
            <person name="Forrest D."/>
            <person name="McFarlane R."/>
            <person name="Onions D."/>
            <person name="Neil J.C."/>
        </authorList>
    </citation>
    <scope>NUCLEOTIDE SEQUENCE [GENOMIC DNA]</scope>
</reference>
<reference key="2">
    <citation type="submission" date="1987-12" db="EMBL/GenBank/DDBJ databases">
        <authorList>
            <person name="Fulton R."/>
        </authorList>
    </citation>
    <scope>SEQUENCE REVISION TO 158-159</scope>
</reference>
<dbReference type="EMBL" id="X05155">
    <property type="protein sequence ID" value="CAA28801.1"/>
    <property type="molecule type" value="Genomic_DNA"/>
</dbReference>
<dbReference type="PIR" id="B26600">
    <property type="entry name" value="RWMVTV"/>
</dbReference>
<dbReference type="PIR" id="C26600">
    <property type="entry name" value="RWMVTC"/>
</dbReference>
<dbReference type="SMR" id="P11364"/>
<dbReference type="GlyCosmos" id="P11364">
    <property type="glycosylation" value="3 sites, No reported glycans"/>
</dbReference>
<dbReference type="GO" id="GO:0005886">
    <property type="term" value="C:plasma membrane"/>
    <property type="evidence" value="ECO:0007669"/>
    <property type="project" value="TreeGrafter"/>
</dbReference>
<dbReference type="GO" id="GO:0007166">
    <property type="term" value="P:cell surface receptor signaling pathway"/>
    <property type="evidence" value="ECO:0007669"/>
    <property type="project" value="TreeGrafter"/>
</dbReference>
<dbReference type="CDD" id="cd05769">
    <property type="entry name" value="IgC1_TCR_beta"/>
    <property type="match status" value="1"/>
</dbReference>
<dbReference type="CDD" id="cd05899">
    <property type="entry name" value="IgV_TCR_beta"/>
    <property type="match status" value="1"/>
</dbReference>
<dbReference type="FunFam" id="2.60.40.10:FF:001090">
    <property type="entry name" value="T cell receptor beta constant 1"/>
    <property type="match status" value="1"/>
</dbReference>
<dbReference type="Gene3D" id="2.60.40.10">
    <property type="entry name" value="Immunoglobulins"/>
    <property type="match status" value="2"/>
</dbReference>
<dbReference type="InterPro" id="IPR007110">
    <property type="entry name" value="Ig-like_dom"/>
</dbReference>
<dbReference type="InterPro" id="IPR036179">
    <property type="entry name" value="Ig-like_dom_sf"/>
</dbReference>
<dbReference type="InterPro" id="IPR013783">
    <property type="entry name" value="Ig-like_fold"/>
</dbReference>
<dbReference type="InterPro" id="IPR003597">
    <property type="entry name" value="Ig_C1-set"/>
</dbReference>
<dbReference type="InterPro" id="IPR003599">
    <property type="entry name" value="Ig_sub"/>
</dbReference>
<dbReference type="InterPro" id="IPR013106">
    <property type="entry name" value="Ig_V-set"/>
</dbReference>
<dbReference type="InterPro" id="IPR050413">
    <property type="entry name" value="TCR_beta_variable"/>
</dbReference>
<dbReference type="PANTHER" id="PTHR23268:SF101">
    <property type="entry name" value="T CELL RECEPTOR BETA VARIABLE 9"/>
    <property type="match status" value="1"/>
</dbReference>
<dbReference type="PANTHER" id="PTHR23268">
    <property type="entry name" value="T-CELL RECEPTOR BETA CHAIN"/>
    <property type="match status" value="1"/>
</dbReference>
<dbReference type="Pfam" id="PF07654">
    <property type="entry name" value="C1-set"/>
    <property type="match status" value="1"/>
</dbReference>
<dbReference type="Pfam" id="PF07686">
    <property type="entry name" value="V-set"/>
    <property type="match status" value="1"/>
</dbReference>
<dbReference type="SMART" id="SM00409">
    <property type="entry name" value="IG"/>
    <property type="match status" value="1"/>
</dbReference>
<dbReference type="SMART" id="SM00407">
    <property type="entry name" value="IGc1"/>
    <property type="match status" value="1"/>
</dbReference>
<dbReference type="SUPFAM" id="SSF48726">
    <property type="entry name" value="Immunoglobulin"/>
    <property type="match status" value="2"/>
</dbReference>
<dbReference type="PROSITE" id="PS50835">
    <property type="entry name" value="IG_LIKE"/>
    <property type="match status" value="2"/>
</dbReference>
<keyword id="KW-0325">Glycoprotein</keyword>
<keyword id="KW-0393">Immunoglobulin domain</keyword>
<keyword id="KW-0675">Receptor</keyword>
<keyword id="KW-0732">Signal</keyword>
<sequence length="321" mass="35581">MISWLPSVAMGSRLLCCVALCLLGAGPADSGLTQTPRHLVKARGQQVTLSCFPISGHLSLYWYQQAVGQGPQLLIQYYNREERGKGNFPERFSAQQFPDSHSELNMTSLELTDSALYLCASSPNEDSEYGETLYFGEGSRLTVVEDLKKVSPPKVTVFEPSEAEISRTLKATLVCLATGFYPDHVELSWWVNGKEVRDGVSTDPEPYKEQSGANVSSYCLSSRLRVSATFWHNPRNHFRCQVQFHGLGKDDQWDYPEAKPVTQNVSADTWGRADCGFTSASYQQGVLSATILYEILLGKATLYAILVSVLALMAKVKRKDS</sequence>
<organism>
    <name type="scientific">Feline leukemia virus</name>
    <dbReference type="NCBI Taxonomy" id="11768"/>
    <lineage>
        <taxon>Viruses</taxon>
        <taxon>Riboviria</taxon>
        <taxon>Pararnavirae</taxon>
        <taxon>Artverviricota</taxon>
        <taxon>Revtraviricetes</taxon>
        <taxon>Ortervirales</taxon>
        <taxon>Retroviridae</taxon>
        <taxon>Orthoretrovirinae</taxon>
        <taxon>Gammaretrovirus</taxon>
    </lineage>
</organism>
<protein>
    <recommendedName>
        <fullName>Viral T-cell receptor beta chain-like T17T-22</fullName>
    </recommendedName>
</protein>
<organismHost>
    <name type="scientific">Felidae</name>
    <name type="common">cat family</name>
    <dbReference type="NCBI Taxonomy" id="9681"/>
</organismHost>
<evidence type="ECO:0000255" key="1"/>